<sequence length="688" mass="79311">MDKVLNREESMELMDLLGLDRSAWGNIPVMRKAYLKKCKELHPDKGGDEDKMKRMNFLYKKMEQGVKVAHQPDFGTWNSSEVPTYGTDEWESWWNTFNEKWDEDLFCHEEMFASDDENTGSQHSTPPKKKKKVEDPKDFPVDLHAFLSQAVFSNRTVASFAVYTTKEKAQILYKKLMEKYSVTFISRHGFGGHNILFFLTPHRHRVSAINNYCQKLCTFSFLICKGVNKEYLFYSALCRQPYAVVEESIQGGLKEHDFNPEEPEETKQVSWKLVTQYALETKCEDVFLLMGMYLDFQENPQQCKKCEKKDQPNHFNHHEKHYYNAQIFADSKNQKSICQQAVDTVAAKQRVDSIHMTREEMLVERFNFLLDKMDLIFGAHGNAVLEQYMAGVAWIHCLLPQMDTVIYDFLKCIVLNIPKKRYWLFKGPIDSGKTTLAAALLDLCGGKSLNVNMPLERLNFELGVGIDQFMVVFEDVKGTGAESRDLPSGHGISNLDCLRDYLDGSVKVNLERKHQNKRTQVFPPGIVTMNEYSVPRTLQARFVRQIDFRPKAYLRKSLSCSEYLLEKRILQSGMTLLLLLIWFRPVADFAAAIHERIVQWKERLDLEISMYTFSTMKANVGMGRPILDFPREEDSEAEDSGHGSSTESQSQCFSQVSEASGADTQENCTFHICKGFQCFKKPKTPPPK</sequence>
<reference key="1">
    <citation type="journal article" date="1984" name="J. Virol.">
        <title>Human polyomavirus JC virus genome.</title>
        <authorList>
            <person name="Frisque R.J."/>
            <person name="Bream G.L."/>
            <person name="Cannella M.T."/>
        </authorList>
    </citation>
    <scope>NUCLEOTIDE SEQUENCE [GENOMIC DNA]</scope>
</reference>
<accession>P03072</accession>
<dbReference type="EC" id="5.6.2.4" evidence="1"/>
<dbReference type="EMBL" id="J02226">
    <property type="protein sequence ID" value="AAA82102.1"/>
    <property type="molecule type" value="Genomic_DNA"/>
</dbReference>
<dbReference type="PIR" id="A03609">
    <property type="entry name" value="TVVPTJ"/>
</dbReference>
<dbReference type="RefSeq" id="NP_043512.1">
    <molecule id="P03072-1"/>
    <property type="nucleotide sequence ID" value="NC_001699.1"/>
</dbReference>
<dbReference type="PDB" id="4LIF">
    <property type="method" value="X-ray"/>
    <property type="resolution" value="2.60 A"/>
    <property type="chains" value="A=132-261"/>
</dbReference>
<dbReference type="PDB" id="4LMD">
    <property type="method" value="X-ray"/>
    <property type="resolution" value="1.50 A"/>
    <property type="chains" value="A/B=132-261"/>
</dbReference>
<dbReference type="PDB" id="4NBP">
    <property type="method" value="X-ray"/>
    <property type="resolution" value="1.32 A"/>
    <property type="chains" value="A=132-261"/>
</dbReference>
<dbReference type="PDB" id="5CYN">
    <property type="method" value="X-ray"/>
    <property type="resolution" value="2.70 A"/>
    <property type="chains" value="A=132-261"/>
</dbReference>
<dbReference type="PDB" id="5J40">
    <property type="method" value="X-ray"/>
    <property type="resolution" value="2.17 A"/>
    <property type="chains" value="A=261-628"/>
</dbReference>
<dbReference type="PDB" id="5J47">
    <property type="method" value="X-ray"/>
    <property type="resolution" value="1.99 A"/>
    <property type="chains" value="A=261-628"/>
</dbReference>
<dbReference type="PDB" id="5J4V">
    <property type="method" value="X-ray"/>
    <property type="resolution" value="2.94 A"/>
    <property type="chains" value="A=261-628"/>
</dbReference>
<dbReference type="PDB" id="5J4Y">
    <property type="method" value="X-ray"/>
    <property type="resolution" value="2.59 A"/>
    <property type="chains" value="A=261-628"/>
</dbReference>
<dbReference type="PDB" id="8SUD">
    <property type="method" value="X-ray"/>
    <property type="resolution" value="2.10 A"/>
    <property type="chains" value="B=111-133"/>
</dbReference>
<dbReference type="PDBsum" id="4LIF"/>
<dbReference type="PDBsum" id="4LMD"/>
<dbReference type="PDBsum" id="4NBP"/>
<dbReference type="PDBsum" id="5CYN"/>
<dbReference type="PDBsum" id="5J40"/>
<dbReference type="PDBsum" id="5J47"/>
<dbReference type="PDBsum" id="5J4V"/>
<dbReference type="PDBsum" id="5J4Y"/>
<dbReference type="PDBsum" id="8SUD"/>
<dbReference type="SMR" id="P03072"/>
<dbReference type="IntAct" id="P03072">
    <property type="interactions" value="1"/>
</dbReference>
<dbReference type="MINT" id="P03072"/>
<dbReference type="BindingDB" id="P03072"/>
<dbReference type="ChEMBL" id="CHEMBL4523163"/>
<dbReference type="DNASU" id="1489517"/>
<dbReference type="GeneID" id="1489517"/>
<dbReference type="KEGG" id="vg:1489517"/>
<dbReference type="OrthoDB" id="14669at10239"/>
<dbReference type="EvolutionaryTrace" id="P03072"/>
<dbReference type="Proteomes" id="UP000008478">
    <property type="component" value="Genome"/>
</dbReference>
<dbReference type="GO" id="GO:0042025">
    <property type="term" value="C:host cell nucleus"/>
    <property type="evidence" value="ECO:0007669"/>
    <property type="project" value="UniProtKB-SubCell"/>
</dbReference>
<dbReference type="GO" id="GO:0005524">
    <property type="term" value="F:ATP binding"/>
    <property type="evidence" value="ECO:0007669"/>
    <property type="project" value="UniProtKB-KW"/>
</dbReference>
<dbReference type="GO" id="GO:0016887">
    <property type="term" value="F:ATP hydrolysis activity"/>
    <property type="evidence" value="ECO:0007669"/>
    <property type="project" value="RHEA"/>
</dbReference>
<dbReference type="GO" id="GO:0003688">
    <property type="term" value="F:DNA replication origin binding"/>
    <property type="evidence" value="ECO:0007669"/>
    <property type="project" value="InterPro"/>
</dbReference>
<dbReference type="GO" id="GO:0004386">
    <property type="term" value="F:helicase activity"/>
    <property type="evidence" value="ECO:0007669"/>
    <property type="project" value="UniProtKB-KW"/>
</dbReference>
<dbReference type="GO" id="GO:0008270">
    <property type="term" value="F:zinc ion binding"/>
    <property type="evidence" value="ECO:0007669"/>
    <property type="project" value="UniProtKB-KW"/>
</dbReference>
<dbReference type="GO" id="GO:0006260">
    <property type="term" value="P:DNA replication"/>
    <property type="evidence" value="ECO:0007669"/>
    <property type="project" value="UniProtKB-KW"/>
</dbReference>
<dbReference type="GO" id="GO:0039645">
    <property type="term" value="P:symbiont-mediated perturbation of host cell cycle G1/S transition checkpoint"/>
    <property type="evidence" value="ECO:0007669"/>
    <property type="project" value="UniProtKB-KW"/>
</dbReference>
<dbReference type="GO" id="GO:0052170">
    <property type="term" value="P:symbiont-mediated suppression of host innate immune response"/>
    <property type="evidence" value="ECO:0007669"/>
    <property type="project" value="UniProtKB-KW"/>
</dbReference>
<dbReference type="GO" id="GO:0039576">
    <property type="term" value="P:symbiont-mediated suppression of host JAK-STAT cascade via inhibition of JAK1 activity"/>
    <property type="evidence" value="ECO:0007669"/>
    <property type="project" value="UniProtKB-KW"/>
</dbReference>
<dbReference type="GO" id="GO:0039502">
    <property type="term" value="P:symbiont-mediated suppression of host type I interferon-mediated signaling pathway"/>
    <property type="evidence" value="ECO:0007669"/>
    <property type="project" value="UniProtKB-KW"/>
</dbReference>
<dbReference type="CDD" id="cd06257">
    <property type="entry name" value="DnaJ"/>
    <property type="match status" value="1"/>
</dbReference>
<dbReference type="FunFam" id="1.10.287.110:FF:000161">
    <property type="entry name" value="Small t antigen"/>
    <property type="match status" value="1"/>
</dbReference>
<dbReference type="Gene3D" id="3.40.1310.20">
    <property type="match status" value="1"/>
</dbReference>
<dbReference type="Gene3D" id="1.10.287.110">
    <property type="entry name" value="DnaJ domain"/>
    <property type="match status" value="1"/>
</dbReference>
<dbReference type="Gene3D" id="1.20.1050.70">
    <property type="entry name" value="Large T antigen, SV40, domain 3"/>
    <property type="match status" value="1"/>
</dbReference>
<dbReference type="Gene3D" id="3.40.50.300">
    <property type="entry name" value="P-loop containing nucleotide triphosphate hydrolases"/>
    <property type="match status" value="1"/>
</dbReference>
<dbReference type="Gene3D" id="1.10.10.510">
    <property type="entry name" value="Zinc finger, large T-antigen D1 domain"/>
    <property type="match status" value="1"/>
</dbReference>
<dbReference type="InterPro" id="IPR001623">
    <property type="entry name" value="DnaJ_domain"/>
</dbReference>
<dbReference type="InterPro" id="IPR014015">
    <property type="entry name" value="Helicase_SF3_DNA-vir"/>
</dbReference>
<dbReference type="InterPro" id="IPR036869">
    <property type="entry name" value="J_dom_sf"/>
</dbReference>
<dbReference type="InterPro" id="IPR016392">
    <property type="entry name" value="Lg_T_Ag_polyomavir"/>
</dbReference>
<dbReference type="InterPro" id="IPR010932">
    <property type="entry name" value="Lg_T_Ag_Polyomavir_C"/>
</dbReference>
<dbReference type="InterPro" id="IPR027417">
    <property type="entry name" value="P-loop_NTPase"/>
</dbReference>
<dbReference type="InterPro" id="IPR003133">
    <property type="entry name" value="T_Ag_DNA-bd"/>
</dbReference>
<dbReference type="InterPro" id="IPR017910">
    <property type="entry name" value="Znf_lg_T-Ag_D1-typ"/>
</dbReference>
<dbReference type="InterPro" id="IPR037102">
    <property type="entry name" value="Znf_lg_T-Ag_D1_dom_sf"/>
</dbReference>
<dbReference type="Pfam" id="PF06431">
    <property type="entry name" value="Polyoma_lg_T_C"/>
    <property type="match status" value="1"/>
</dbReference>
<dbReference type="Pfam" id="PF02217">
    <property type="entry name" value="T_Ag_DNA_bind"/>
    <property type="match status" value="1"/>
</dbReference>
<dbReference type="PIRSF" id="PIRSF003368">
    <property type="entry name" value="Large_T_antigen_polyomaV"/>
    <property type="match status" value="1"/>
</dbReference>
<dbReference type="SMART" id="SM00271">
    <property type="entry name" value="DnaJ"/>
    <property type="match status" value="1"/>
</dbReference>
<dbReference type="SUPFAM" id="SSF46565">
    <property type="entry name" value="Chaperone J-domain"/>
    <property type="match status" value="1"/>
</dbReference>
<dbReference type="SUPFAM" id="SSF55464">
    <property type="entry name" value="Origin of replication-binding domain, RBD-like"/>
    <property type="match status" value="1"/>
</dbReference>
<dbReference type="SUPFAM" id="SSF52540">
    <property type="entry name" value="P-loop containing nucleoside triphosphate hydrolases"/>
    <property type="match status" value="1"/>
</dbReference>
<dbReference type="PROSITE" id="PS50076">
    <property type="entry name" value="DNAJ_2"/>
    <property type="match status" value="1"/>
</dbReference>
<dbReference type="PROSITE" id="PS51206">
    <property type="entry name" value="SF3_HELICASE_1"/>
    <property type="match status" value="1"/>
</dbReference>
<dbReference type="PROSITE" id="PS51287">
    <property type="entry name" value="T_AG_OBD"/>
    <property type="match status" value="1"/>
</dbReference>
<dbReference type="PROSITE" id="PS51341">
    <property type="entry name" value="ZF_LTAG_D1"/>
    <property type="match status" value="1"/>
</dbReference>
<comment type="function">
    <text evidence="1">Isoform large T antigen is a key early protein essential for both driving viral replication and inducing cellular transformation. Plays a role in viral genome replication by driving entry of quiescent cells into the cell cycle and by autoregulating the synthesis of viral early mRNA. Displays highly oncogenic activities by corrupting the host cellular checkpoint mechanisms that guard cell division and the transcription, replication, and repair of DNA. Participates in the modulation of cellular gene expression preceeding viral DNA replication. This step involves binding to host key cell cycle regulators retinoblastoma protein RB1/pRb and TP53. Induces the disassembly of host E2F1 transcription factors from RB1, thus promoting transcriptional activation of E2F1-regulated S-phase genes. Inhibits host TP53 binding to DNA, abrogating the ability of TP53 to stimulate gene expression. Plays the role of a TFIID-associated factor (TAF) in transcription initiation for all three RNA polymerases, by stabilizing the TBP-TFIIA complex on promoters. Initiates viral DNA replication and unwinding via interactions with the viral origin of replication. Binds two adjacent sites in the SV40 origin. The replication fork movement is facilitated by Large T antigen helicase activity. Has processive 3'-5' DNA helicase activity which requires a short 3' single-stranded region and ATP. Activates the transcription of viral late mRNA, through host TBP and TFIIA stabilization. Interferes with histone deacetylation mediated by HDAC1, leading to activation of transcription.</text>
</comment>
<comment type="catalytic activity">
    <reaction evidence="1">
        <text>Couples ATP hydrolysis with the unwinding of duplex DNA by translocating in the 3'-5' direction.</text>
        <dbReference type="EC" id="5.6.2.4"/>
    </reaction>
</comment>
<comment type="catalytic activity">
    <reaction evidence="1">
        <text>ATP + H2O = ADP + phosphate + H(+)</text>
        <dbReference type="Rhea" id="RHEA:13065"/>
        <dbReference type="ChEBI" id="CHEBI:15377"/>
        <dbReference type="ChEBI" id="CHEBI:15378"/>
        <dbReference type="ChEBI" id="CHEBI:30616"/>
        <dbReference type="ChEBI" id="CHEBI:43474"/>
        <dbReference type="ChEBI" id="CHEBI:456216"/>
        <dbReference type="EC" id="5.6.2.4"/>
    </reaction>
</comment>
<comment type="cofactor">
    <cofactor evidence="1">
        <name>Mg(2+)</name>
        <dbReference type="ChEBI" id="CHEBI:18420"/>
    </cofactor>
    <text evidence="1">DNA helicase activity requires Mg(2+).</text>
</comment>
<comment type="subunit">
    <text evidence="1">Forms homohexamers in the presence of ATP. Interacts with host HDAC1. Interacts (via LXCXE domain) with host RB1; the interaction induces the aberrant dissociation of RB1-E2F1 complex thereby disrupting RB1's activity. Interacts (via LXCXE domain) with host pRB-related proteins RBL1 and RBL2. Interacts (via C-terminus) with host TOP1 and POLA1 allowing DNA replication. Interacts with host TP53, inhibiting TP53 binding to DNA. Interacts with host preinitiation complex components TBP, TFIIA and TFIID to regulate transcription initiation.</text>
</comment>
<comment type="interaction">
    <interactant intactId="EBI-8658901">
        <id>P03072</id>
    </interactant>
    <interactant intactId="EBI-1045860">
        <id>Q00577</id>
        <label>PURA</label>
    </interactant>
    <organismsDiffer>true</organismsDiffer>
    <experiments>4</experiments>
</comment>
<comment type="subcellular location">
    <subcellularLocation>
        <location evidence="1">Host nucleus</location>
    </subcellularLocation>
</comment>
<comment type="alternative products">
    <event type="alternative splicing"/>
    <isoform>
        <id>P03072-1</id>
        <name>Large T antigen</name>
        <sequence type="displayed"/>
    </isoform>
    <isoform>
        <id>P03083-1</id>
        <name>Small t antigen</name>
        <sequence type="external"/>
    </isoform>
</comment>
<comment type="domain">
    <text evidence="1">The J domain is essential for multiple viral activities, including virion assembly, viral DNA replication, transformation and transcriptional activation.</text>
</comment>
<comment type="domain">
    <text evidence="1">The LXCXE motif specifically binds to host pRB, RBL1, and RBL2.</text>
</comment>
<comment type="domain">
    <text evidence="1">The zinc finger region contributes to protein-protein interactions essential for the assembly of stable T-antigen hexamers at the origin of replication. The hexamers are required for subsequent alterations in the structure of origin DNA.</text>
</comment>
<comment type="domain">
    <text evidence="1">The ATP binding/ATPase domain is required for proper hexamer assembly and helicase activity.</text>
</comment>
<comment type="PTM">
    <text evidence="1">Phosphorylated on both serine and threonine residues. Small t antigen inhibits the dephosphorylation by the AC form of PP2A.</text>
</comment>
<comment type="PTM">
    <text evidence="1">O-Glycosylated near the C-terminal region.</text>
</comment>
<comment type="PTM">
    <text evidence="1">Acetylated by CBP in a TP53-dependent manner.</text>
</comment>
<evidence type="ECO:0000250" key="1">
    <source>
        <dbReference type="UniProtKB" id="P03070"/>
    </source>
</evidence>
<evidence type="ECO:0000255" key="2">
    <source>
        <dbReference type="PROSITE-ProRule" id="PRU00286"/>
    </source>
</evidence>
<evidence type="ECO:0000255" key="3">
    <source>
        <dbReference type="PROSITE-ProRule" id="PRU00551"/>
    </source>
</evidence>
<evidence type="ECO:0000255" key="4">
    <source>
        <dbReference type="PROSITE-ProRule" id="PRU00620"/>
    </source>
</evidence>
<evidence type="ECO:0000255" key="5">
    <source>
        <dbReference type="PROSITE-ProRule" id="PRU00671"/>
    </source>
</evidence>
<evidence type="ECO:0000256" key="6">
    <source>
        <dbReference type="SAM" id="MobiDB-lite"/>
    </source>
</evidence>
<evidence type="ECO:0000305" key="7"/>
<evidence type="ECO:0007829" key="8">
    <source>
        <dbReference type="PDB" id="4NBP"/>
    </source>
</evidence>
<evidence type="ECO:0007829" key="9">
    <source>
        <dbReference type="PDB" id="5J47"/>
    </source>
</evidence>
<evidence type="ECO:0007829" key="10">
    <source>
        <dbReference type="PDB" id="5J4Y"/>
    </source>
</evidence>
<protein>
    <recommendedName>
        <fullName>Large T antigen</fullName>
        <shortName>LT</shortName>
        <shortName>LT-AG</shortName>
        <ecNumber evidence="1">5.6.2.4</ecNumber>
    </recommendedName>
    <alternativeName>
        <fullName evidence="7">DNA 3'-5' helicase large T antigen</fullName>
    </alternativeName>
</protein>
<keyword id="KW-0002">3D-structure</keyword>
<keyword id="KW-0007">Acetylation</keyword>
<keyword id="KW-0025">Alternative splicing</keyword>
<keyword id="KW-0067">ATP-binding</keyword>
<keyword id="KW-0235">DNA replication</keyword>
<keyword id="KW-0238">DNA-binding</keyword>
<keyword id="KW-0244">Early protein</keyword>
<keyword id="KW-1078">G1/S host cell cycle checkpoint dysregulation by virus</keyword>
<keyword id="KW-0347">Helicase</keyword>
<keyword id="KW-1048">Host nucleus</keyword>
<keyword id="KW-0945">Host-virus interaction</keyword>
<keyword id="KW-0378">Hydrolase</keyword>
<keyword id="KW-1090">Inhibition of host innate immune response by virus</keyword>
<keyword id="KW-1114">Inhibition of host interferon signaling pathway by virus</keyword>
<keyword id="KW-1096">Inhibition of host JAK1 by virus</keyword>
<keyword id="KW-0922">Interferon antiviral system evasion</keyword>
<keyword id="KW-0413">Isomerase</keyword>
<keyword id="KW-0460">Magnesium</keyword>
<keyword id="KW-0479">Metal-binding</keyword>
<keyword id="KW-1121">Modulation of host cell cycle by virus</keyword>
<keyword id="KW-0547">Nucleotide-binding</keyword>
<keyword id="KW-0553">Oncogene</keyword>
<keyword id="KW-0597">Phosphoprotein</keyword>
<keyword id="KW-1185">Reference proteome</keyword>
<keyword id="KW-0899">Viral immunoevasion</keyword>
<keyword id="KW-0862">Zinc</keyword>
<keyword id="KW-0863">Zinc-finger</keyword>
<organism>
    <name type="scientific">JC polyomavirus</name>
    <name type="common">JCPyV</name>
    <name type="synonym">JCV</name>
    <dbReference type="NCBI Taxonomy" id="10632"/>
    <lineage>
        <taxon>Viruses</taxon>
        <taxon>Monodnaviria</taxon>
        <taxon>Shotokuvirae</taxon>
        <taxon>Cossaviricota</taxon>
        <taxon>Papovaviricetes</taxon>
        <taxon>Sepolyvirales</taxon>
        <taxon>Polyomaviridae</taxon>
        <taxon>Betapolyomavirus</taxon>
        <taxon>Betapolyomavirus secuhominis</taxon>
    </lineage>
</organism>
<proteinExistence type="evidence at protein level"/>
<organismHost>
    <name type="scientific">Homo sapiens</name>
    <name type="common">Human</name>
    <dbReference type="NCBI Taxonomy" id="9606"/>
</organismHost>
<name>LT_POVJC</name>
<feature type="chain" id="PRO_0000115040" description="Large T antigen">
    <location>
        <begin position="1"/>
        <end position="688"/>
    </location>
</feature>
<feature type="domain" description="J" evidence="2">
    <location>
        <begin position="12"/>
        <end position="75"/>
    </location>
</feature>
<feature type="domain" description="SF3 helicase" evidence="3">
    <location>
        <begin position="401"/>
        <end position="561"/>
    </location>
</feature>
<feature type="DNA-binding region" description="T-ag OBD" evidence="4">
    <location>
        <begin position="140"/>
        <end position="255"/>
    </location>
</feature>
<feature type="zinc finger region" description="T-ag D1-type" evidence="5">
    <location>
        <begin position="266"/>
        <end position="358"/>
    </location>
</feature>
<feature type="region of interest" description="Disordered" evidence="6">
    <location>
        <begin position="115"/>
        <end position="135"/>
    </location>
</feature>
<feature type="region of interest" description="Disordered" evidence="6">
    <location>
        <begin position="632"/>
        <end position="658"/>
    </location>
</feature>
<feature type="short sequence motif" description="LXCXE motif" evidence="1">
    <location>
        <begin position="105"/>
        <end position="109"/>
    </location>
</feature>
<feature type="short sequence motif" description="Nuclear localization signal" evidence="1">
    <location>
        <begin position="126"/>
        <end position="133"/>
    </location>
</feature>
<feature type="compositionally biased region" description="Polar residues" evidence="6">
    <location>
        <begin position="642"/>
        <end position="658"/>
    </location>
</feature>
<feature type="binding site" evidence="5">
    <location>
        <position position="303"/>
    </location>
    <ligand>
        <name>Zn(2+)</name>
        <dbReference type="ChEBI" id="CHEBI:29105"/>
    </ligand>
</feature>
<feature type="binding site" evidence="5">
    <location>
        <position position="306"/>
    </location>
    <ligand>
        <name>Zn(2+)</name>
        <dbReference type="ChEBI" id="CHEBI:29105"/>
    </ligand>
</feature>
<feature type="binding site" evidence="5">
    <location>
        <position position="314"/>
    </location>
    <ligand>
        <name>Zn(2+)</name>
        <dbReference type="ChEBI" id="CHEBI:29105"/>
    </ligand>
</feature>
<feature type="binding site" evidence="5">
    <location>
        <position position="318"/>
    </location>
    <ligand>
        <name>Zn(2+)</name>
        <dbReference type="ChEBI" id="CHEBI:29105"/>
    </ligand>
</feature>
<feature type="binding site" evidence="3">
    <location>
        <begin position="427"/>
        <end position="434"/>
    </location>
    <ligand>
        <name>ATP</name>
        <dbReference type="ChEBI" id="CHEBI:30616"/>
    </ligand>
</feature>
<feature type="modified residue" description="N-acetylmethionine; by host" evidence="1">
    <location>
        <position position="1"/>
    </location>
</feature>
<feature type="modified residue" description="Phosphoserine; by host" evidence="1">
    <location>
        <position position="114"/>
    </location>
</feature>
<feature type="modified residue" description="Phosphoserine; by host" evidence="1">
    <location>
        <position position="121"/>
    </location>
</feature>
<feature type="modified residue" description="Phosphoserine; by host" evidence="1">
    <location>
        <position position="124"/>
    </location>
</feature>
<feature type="modified residue" description="Phosphothreonine; by host" evidence="1">
    <location>
        <position position="125"/>
    </location>
</feature>
<feature type="modified residue" description="Phosphoserine; by host" evidence="1">
    <location>
        <position position="660"/>
    </location>
</feature>
<feature type="modified residue" description="N6-acetyllysine; by host" evidence="1">
    <location>
        <position position="680"/>
    </location>
</feature>
<feature type="modified residue" description="Phosphothreonine; by host" evidence="1">
    <location>
        <position position="684"/>
    </location>
</feature>
<feature type="strand" evidence="8">
    <location>
        <begin position="137"/>
        <end position="139"/>
    </location>
</feature>
<feature type="helix" evidence="8">
    <location>
        <begin position="141"/>
        <end position="146"/>
    </location>
</feature>
<feature type="strand" evidence="8">
    <location>
        <begin position="157"/>
        <end position="165"/>
    </location>
</feature>
<feature type="helix" evidence="8">
    <location>
        <begin position="166"/>
        <end position="179"/>
    </location>
</feature>
<feature type="strand" evidence="8">
    <location>
        <begin position="183"/>
        <end position="190"/>
    </location>
</feature>
<feature type="strand" evidence="8">
    <location>
        <begin position="193"/>
        <end position="204"/>
    </location>
</feature>
<feature type="helix" evidence="8">
    <location>
        <begin position="206"/>
        <end position="214"/>
    </location>
</feature>
<feature type="strand" evidence="8">
    <location>
        <begin position="218"/>
        <end position="220"/>
    </location>
</feature>
<feature type="strand" evidence="8">
    <location>
        <begin position="222"/>
        <end position="229"/>
    </location>
</feature>
<feature type="helix" evidence="8">
    <location>
        <begin position="230"/>
        <end position="236"/>
    </location>
</feature>
<feature type="strand" evidence="8">
    <location>
        <begin position="243"/>
        <end position="249"/>
    </location>
</feature>
<feature type="helix" evidence="8">
    <location>
        <begin position="255"/>
        <end position="257"/>
    </location>
</feature>
<feature type="helix" evidence="9">
    <location>
        <begin position="271"/>
        <end position="280"/>
    </location>
</feature>
<feature type="helix" evidence="9">
    <location>
        <begin position="286"/>
        <end position="294"/>
    </location>
</feature>
<feature type="helix" evidence="10">
    <location>
        <begin position="295"/>
        <end position="297"/>
    </location>
</feature>
<feature type="helix" evidence="9">
    <location>
        <begin position="300"/>
        <end position="302"/>
    </location>
</feature>
<feature type="helix" evidence="9">
    <location>
        <begin position="304"/>
        <end position="308"/>
    </location>
</feature>
<feature type="helix" evidence="9">
    <location>
        <begin position="312"/>
        <end position="315"/>
    </location>
</feature>
<feature type="helix" evidence="9">
    <location>
        <begin position="318"/>
        <end position="329"/>
    </location>
</feature>
<feature type="helix" evidence="9">
    <location>
        <begin position="334"/>
        <end position="355"/>
    </location>
</feature>
<feature type="helix" evidence="9">
    <location>
        <begin position="358"/>
        <end position="376"/>
    </location>
</feature>
<feature type="helix" evidence="9">
    <location>
        <begin position="385"/>
        <end position="398"/>
    </location>
</feature>
<feature type="helix" evidence="9">
    <location>
        <begin position="402"/>
        <end position="415"/>
    </location>
</feature>
<feature type="strand" evidence="9">
    <location>
        <begin position="420"/>
        <end position="426"/>
    </location>
</feature>
<feature type="strand" evidence="10">
    <location>
        <begin position="429"/>
        <end position="432"/>
    </location>
</feature>
<feature type="helix" evidence="9">
    <location>
        <begin position="433"/>
        <end position="444"/>
    </location>
</feature>
<feature type="strand" evidence="9">
    <location>
        <begin position="447"/>
        <end position="449"/>
    </location>
</feature>
<feature type="helix" evidence="9">
    <location>
        <begin position="455"/>
        <end position="462"/>
    </location>
</feature>
<feature type="helix" evidence="9">
    <location>
        <begin position="463"/>
        <end position="465"/>
    </location>
</feature>
<feature type="strand" evidence="9">
    <location>
        <begin position="471"/>
        <end position="476"/>
    </location>
</feature>
<feature type="helix" evidence="9">
    <location>
        <begin position="482"/>
        <end position="484"/>
    </location>
</feature>
<feature type="helix" evidence="9">
    <location>
        <begin position="491"/>
        <end position="495"/>
    </location>
</feature>
<feature type="helix" evidence="9">
    <location>
        <begin position="499"/>
        <end position="503"/>
    </location>
</feature>
<feature type="strand" evidence="9">
    <location>
        <begin position="508"/>
        <end position="510"/>
    </location>
</feature>
<feature type="strand" evidence="9">
    <location>
        <begin position="518"/>
        <end position="520"/>
    </location>
</feature>
<feature type="strand" evidence="9">
    <location>
        <begin position="525"/>
        <end position="529"/>
    </location>
</feature>
<feature type="helix" evidence="9">
    <location>
        <begin position="536"/>
        <end position="539"/>
    </location>
</feature>
<feature type="strand" evidence="9">
    <location>
        <begin position="543"/>
        <end position="547"/>
    </location>
</feature>
<feature type="helix" evidence="9">
    <location>
        <begin position="552"/>
        <end position="559"/>
    </location>
</feature>
<feature type="helix" evidence="9">
    <location>
        <begin position="563"/>
        <end position="566"/>
    </location>
</feature>
<feature type="helix" evidence="9">
    <location>
        <begin position="573"/>
        <end position="583"/>
    </location>
</feature>
<feature type="helix" evidence="9">
    <location>
        <begin position="586"/>
        <end position="588"/>
    </location>
</feature>
<feature type="helix" evidence="9">
    <location>
        <begin position="591"/>
        <end position="593"/>
    </location>
</feature>
<feature type="helix" evidence="9">
    <location>
        <begin position="594"/>
        <end position="607"/>
    </location>
</feature>
<feature type="helix" evidence="9">
    <location>
        <begin position="610"/>
        <end position="621"/>
    </location>
</feature>